<reference key="1">
    <citation type="journal article" date="2007" name="PLoS Biol.">
        <title>Evolution of symbiotic bacteria in the distal human intestine.</title>
        <authorList>
            <person name="Xu J."/>
            <person name="Mahowald M.A."/>
            <person name="Ley R.E."/>
            <person name="Lozupone C.A."/>
            <person name="Hamady M."/>
            <person name="Martens E.C."/>
            <person name="Henrissat B."/>
            <person name="Coutinho P.M."/>
            <person name="Minx P."/>
            <person name="Latreille P."/>
            <person name="Cordum H."/>
            <person name="Van Brunt A."/>
            <person name="Kim K."/>
            <person name="Fulton R.S."/>
            <person name="Fulton L.A."/>
            <person name="Clifton S.W."/>
            <person name="Wilson R.K."/>
            <person name="Knight R.D."/>
            <person name="Gordon J.I."/>
        </authorList>
    </citation>
    <scope>NUCLEOTIDE SEQUENCE [LARGE SCALE GENOMIC DNA]</scope>
    <source>
        <strain>ATCC 8482 / DSM 1447 / JCM 5826 / CCUG 4940 / NBRC 14291 / NCTC 11154</strain>
    </source>
</reference>
<evidence type="ECO:0000250" key="1">
    <source>
        <dbReference type="UniProtKB" id="Q5LGZ8"/>
    </source>
</evidence>
<evidence type="ECO:0000255" key="2">
    <source>
        <dbReference type="PROSITE-ProRule" id="PRU00303"/>
    </source>
</evidence>
<evidence type="ECO:0000305" key="3"/>
<gene>
    <name type="primary">glaB1</name>
    <name type="ordered locus">BVU_0104</name>
</gene>
<accession>A6KWM0</accession>
<name>GLAB1_PHOV8</name>
<sequence length="592" mass="66484">MKLLSVLSLSLVLSCTTLSAQKVYEISAFGLKANSSKNASPVLQKALAKIKAEYKEGEKVILRFPEGRYEFHEKGAAVREYYISNHDQTNPKKVGIALEDMKNLTLDGQGSEFVFHGRMLPVSLLRSENCLLKNFSIDFENPHIAQVKIVENDPQDGIVFEPAPWVDYRIAKDSIFEAYGEGWTMRHSWGIAFDGDTKHLVYNTSDIGCPTKGASEVAPRRIHAPGWKDARLVPGTVVAMRGWGRPTPGIFLSHDVNTTIENVKVHYAEGMGLLAQLCENITLEKFGVCLKGDADPRYFTTQADATHFSGCKGKIVSCNGLYEGMMDDAINVHGTYLKVVKRVDDRTLVGRYMHGQSWGFEWGCPGDEVQFIRSNTMELVGKQNKIISIRPYDKEQTEGAREFLITFQEPVDQVINEQSGFGIENLTWTPEVLFSGNVIRNNRARGSLFSTPRKTIVENNLFDHTSGAAILLCGDCNGWFETGACRHVIIRKNRFVNALTNLFQFTNAVISIYPEIPDLKGQQQYFHGGPEGGIVIEDNEFETFDAPILYAKSVDGLVFRNNTIKLNTEYKPFHPNRNRFWLERVTNVTIAE</sequence>
<organism>
    <name type="scientific">Phocaeicola vulgatus (strain ATCC 8482 / DSM 1447 / JCM 5826 / CCUG 4940 / NBRC 14291 / NCTC 11154)</name>
    <name type="common">Bacteroides vulgatus</name>
    <dbReference type="NCBI Taxonomy" id="435590"/>
    <lineage>
        <taxon>Bacteria</taxon>
        <taxon>Pseudomonadati</taxon>
        <taxon>Bacteroidota</taxon>
        <taxon>Bacteroidia</taxon>
        <taxon>Bacteroidales</taxon>
        <taxon>Bacteroidaceae</taxon>
        <taxon>Phocaeicola</taxon>
    </lineage>
</organism>
<protein>
    <recommendedName>
        <fullName>Alpha-1,3-galactosidase B</fullName>
        <ecNumber evidence="1">3.2.1.n1</ecNumber>
        <ecNumber evidence="1">3.2.1.n2</ecNumber>
    </recommendedName>
    <alternativeName>
        <fullName>Exo-alpha-galactosidase B1</fullName>
        <ecNumber evidence="1">3.2.1.22</ecNumber>
    </alternativeName>
</protein>
<dbReference type="EC" id="3.2.1.n1" evidence="1"/>
<dbReference type="EC" id="3.2.1.n2" evidence="1"/>
<dbReference type="EC" id="3.2.1.22" evidence="1"/>
<dbReference type="EMBL" id="CP000139">
    <property type="protein sequence ID" value="ABR37834.1"/>
    <property type="molecule type" value="Genomic_DNA"/>
</dbReference>
<dbReference type="RefSeq" id="WP_005843041.1">
    <property type="nucleotide sequence ID" value="NZ_JANSWM010000057.1"/>
</dbReference>
<dbReference type="SMR" id="A6KWM0"/>
<dbReference type="STRING" id="435590.BVU_0104"/>
<dbReference type="CAZy" id="GH110">
    <property type="family name" value="Glycoside Hydrolase Family 110"/>
</dbReference>
<dbReference type="PaxDb" id="435590-BVU_0104"/>
<dbReference type="GeneID" id="5301074"/>
<dbReference type="KEGG" id="bvu:BVU_0104"/>
<dbReference type="eggNOG" id="COG5434">
    <property type="taxonomic scope" value="Bacteria"/>
</dbReference>
<dbReference type="HOGENOM" id="CLU_017693_0_0_10"/>
<dbReference type="Proteomes" id="UP000002861">
    <property type="component" value="Chromosome"/>
</dbReference>
<dbReference type="GO" id="GO:0005886">
    <property type="term" value="C:plasma membrane"/>
    <property type="evidence" value="ECO:0007669"/>
    <property type="project" value="UniProtKB-SubCell"/>
</dbReference>
<dbReference type="GO" id="GO:0004557">
    <property type="term" value="F:alpha-galactosidase activity"/>
    <property type="evidence" value="ECO:0007669"/>
    <property type="project" value="UniProtKB-EC"/>
</dbReference>
<dbReference type="Gene3D" id="2.160.20.10">
    <property type="entry name" value="Single-stranded right-handed beta-helix, Pectin lyase-like"/>
    <property type="match status" value="2"/>
</dbReference>
<dbReference type="InterPro" id="IPR056441">
    <property type="entry name" value="Beta-barrel_GLAA-B_II"/>
</dbReference>
<dbReference type="InterPro" id="IPR012334">
    <property type="entry name" value="Pectin_lyas_fold"/>
</dbReference>
<dbReference type="InterPro" id="IPR011050">
    <property type="entry name" value="Pectin_lyase_fold/virulence"/>
</dbReference>
<dbReference type="Pfam" id="PF23763">
    <property type="entry name" value="Beta-barrel_GLAA-B_I"/>
    <property type="match status" value="1"/>
</dbReference>
<dbReference type="Pfam" id="PF23764">
    <property type="entry name" value="Beta-barrel_GLAA-B_II"/>
    <property type="match status" value="1"/>
</dbReference>
<dbReference type="SUPFAM" id="SSF51126">
    <property type="entry name" value="Pectin lyase-like"/>
    <property type="match status" value="1"/>
</dbReference>
<dbReference type="PROSITE" id="PS51257">
    <property type="entry name" value="PROKAR_LIPOPROTEIN"/>
    <property type="match status" value="1"/>
</dbReference>
<feature type="signal peptide" evidence="2">
    <location>
        <begin position="1"/>
        <end position="14"/>
    </location>
</feature>
<feature type="chain" id="PRO_0000348479" description="Alpha-1,3-galactosidase B">
    <location>
        <begin position="15"/>
        <end position="592"/>
    </location>
</feature>
<feature type="repeat" description="PbH1 1">
    <location>
        <begin position="429"/>
        <end position="451"/>
    </location>
</feature>
<feature type="repeat" description="PbH1 2">
    <location>
        <begin position="452"/>
        <end position="474"/>
    </location>
</feature>
<feature type="repeat" description="PbH1 3">
    <location>
        <begin position="485"/>
        <end position="538"/>
    </location>
</feature>
<feature type="lipid moiety-binding region" description="N-palmitoyl cysteine" evidence="2">
    <location>
        <position position="15"/>
    </location>
</feature>
<feature type="lipid moiety-binding region" description="S-diacylglycerol cysteine" evidence="2">
    <location>
        <position position="15"/>
    </location>
</feature>
<keyword id="KW-1003">Cell membrane</keyword>
<keyword id="KW-0326">Glycosidase</keyword>
<keyword id="KW-0378">Hydrolase</keyword>
<keyword id="KW-0449">Lipoprotein</keyword>
<keyword id="KW-0472">Membrane</keyword>
<keyword id="KW-0564">Palmitate</keyword>
<keyword id="KW-0677">Repeat</keyword>
<keyword id="KW-0732">Signal</keyword>
<proteinExistence type="inferred from homology"/>
<comment type="function">
    <text evidence="1">Alpha-galactosidase. Removes both branched alpha-1,3-linked galactose residues of blood group B antigens and linear alpha-1,3-linked galactose structures.</text>
</comment>
<comment type="catalytic activity">
    <reaction evidence="1">
        <text>Hydrolysis of terminal, non-reducing branched (1-&gt;3)-alpha-D-galactosidic residues, producing free D-galactose.</text>
        <dbReference type="EC" id="3.2.1.n1"/>
    </reaction>
</comment>
<comment type="catalytic activity">
    <reaction evidence="1">
        <text>Hydrolysis of terminal, non-reducing linear (1-&gt;3)-alpha-D-galactosidic residues, producing free D-galactose.</text>
        <dbReference type="EC" id="3.2.1.n2"/>
    </reaction>
</comment>
<comment type="catalytic activity">
    <reaction evidence="1">
        <text>Hydrolysis of terminal, non-reducing alpha-D-galactose residues in alpha-D-galactosides, including galactose oligosaccharides, galactomannans and galactolipids.</text>
        <dbReference type="EC" id="3.2.1.22"/>
    </reaction>
</comment>
<comment type="subcellular location">
    <subcellularLocation>
        <location evidence="2">Cell membrane</location>
        <topology evidence="2">Lipid-anchor</topology>
    </subcellularLocation>
</comment>
<comment type="similarity">
    <text evidence="3">Belongs to the glycosyl hydrolase 110 family. B subfamily.</text>
</comment>